<dbReference type="EMBL" id="AL035394">
    <property type="protein sequence ID" value="CAA23041.1"/>
    <property type="molecule type" value="Genomic_DNA"/>
</dbReference>
<dbReference type="EMBL" id="AL161560">
    <property type="protein sequence ID" value="CAB81293.1"/>
    <property type="molecule type" value="Genomic_DNA"/>
</dbReference>
<dbReference type="EMBL" id="CP002687">
    <property type="protein sequence ID" value="AEE84801.1"/>
    <property type="molecule type" value="Genomic_DNA"/>
</dbReference>
<dbReference type="EMBL" id="CP002687">
    <property type="protein sequence ID" value="AEE84802.1"/>
    <property type="molecule type" value="Genomic_DNA"/>
</dbReference>
<dbReference type="EMBL" id="AY057475">
    <property type="protein sequence ID" value="AAL09709.1"/>
    <property type="molecule type" value="mRNA"/>
</dbReference>
<dbReference type="EMBL" id="AY140049">
    <property type="protein sequence ID" value="AAM98190.1"/>
    <property type="molecule type" value="mRNA"/>
</dbReference>
<dbReference type="EMBL" id="BT015038">
    <property type="protein sequence ID" value="AAT70489.1"/>
    <property type="molecule type" value="mRNA"/>
</dbReference>
<dbReference type="PIR" id="T05607">
    <property type="entry name" value="T05607"/>
</dbReference>
<dbReference type="RefSeq" id="NP_194106.1">
    <property type="nucleotide sequence ID" value="NM_118506.3"/>
</dbReference>
<dbReference type="RefSeq" id="NP_974599.1">
    <property type="nucleotide sequence ID" value="NM_202870.1"/>
</dbReference>
<dbReference type="SMR" id="Q9SUQ2"/>
<dbReference type="BioGRID" id="13764">
    <property type="interactions" value="14"/>
</dbReference>
<dbReference type="FunCoup" id="Q9SUQ2">
    <property type="interactions" value="273"/>
</dbReference>
<dbReference type="IntAct" id="Q9SUQ2">
    <property type="interactions" value="16"/>
</dbReference>
<dbReference type="STRING" id="3702.Q9SUQ2"/>
<dbReference type="iPTMnet" id="Q9SUQ2"/>
<dbReference type="PaxDb" id="3702-AT4G23750.1"/>
<dbReference type="ProteomicsDB" id="224496"/>
<dbReference type="EnsemblPlants" id="AT4G23750.1">
    <property type="protein sequence ID" value="AT4G23750.1"/>
    <property type="gene ID" value="AT4G23750"/>
</dbReference>
<dbReference type="EnsemblPlants" id="AT4G23750.2">
    <property type="protein sequence ID" value="AT4G23750.2"/>
    <property type="gene ID" value="AT4G23750"/>
</dbReference>
<dbReference type="GeneID" id="828475"/>
<dbReference type="Gramene" id="AT4G23750.1">
    <property type="protein sequence ID" value="AT4G23750.1"/>
    <property type="gene ID" value="AT4G23750"/>
</dbReference>
<dbReference type="Gramene" id="AT4G23750.2">
    <property type="protein sequence ID" value="AT4G23750.2"/>
    <property type="gene ID" value="AT4G23750"/>
</dbReference>
<dbReference type="KEGG" id="ath:AT4G23750"/>
<dbReference type="Araport" id="AT4G23750"/>
<dbReference type="TAIR" id="AT4G23750">
    <property type="gene designation" value="CRF2"/>
</dbReference>
<dbReference type="eggNOG" id="ENOG502R7AV">
    <property type="taxonomic scope" value="Eukaryota"/>
</dbReference>
<dbReference type="HOGENOM" id="CLU_062946_1_0_1"/>
<dbReference type="InParanoid" id="Q9SUQ2"/>
<dbReference type="OMA" id="FTEHKNH"/>
<dbReference type="OrthoDB" id="777519at2759"/>
<dbReference type="PhylomeDB" id="Q9SUQ2"/>
<dbReference type="PRO" id="PR:Q9SUQ2"/>
<dbReference type="Proteomes" id="UP000006548">
    <property type="component" value="Chromosome 4"/>
</dbReference>
<dbReference type="ExpressionAtlas" id="Q9SUQ2">
    <property type="expression patterns" value="baseline and differential"/>
</dbReference>
<dbReference type="GO" id="GO:0005737">
    <property type="term" value="C:cytoplasm"/>
    <property type="evidence" value="ECO:0007669"/>
    <property type="project" value="UniProtKB-SubCell"/>
</dbReference>
<dbReference type="GO" id="GO:0005634">
    <property type="term" value="C:nucleus"/>
    <property type="evidence" value="ECO:0000314"/>
    <property type="project" value="TAIR"/>
</dbReference>
<dbReference type="GO" id="GO:0003700">
    <property type="term" value="F:DNA-binding transcription factor activity"/>
    <property type="evidence" value="ECO:0000250"/>
    <property type="project" value="TAIR"/>
</dbReference>
<dbReference type="GO" id="GO:0042802">
    <property type="term" value="F:identical protein binding"/>
    <property type="evidence" value="ECO:0000353"/>
    <property type="project" value="IntAct"/>
</dbReference>
<dbReference type="GO" id="GO:0000976">
    <property type="term" value="F:transcription cis-regulatory region binding"/>
    <property type="evidence" value="ECO:0000353"/>
    <property type="project" value="TAIR"/>
</dbReference>
<dbReference type="GO" id="GO:0048825">
    <property type="term" value="P:cotyledon development"/>
    <property type="evidence" value="ECO:0000315"/>
    <property type="project" value="TAIR"/>
</dbReference>
<dbReference type="GO" id="GO:0009736">
    <property type="term" value="P:cytokinin-activated signaling pathway"/>
    <property type="evidence" value="ECO:0007669"/>
    <property type="project" value="UniProtKB-KW"/>
</dbReference>
<dbReference type="GO" id="GO:0009873">
    <property type="term" value="P:ethylene-activated signaling pathway"/>
    <property type="evidence" value="ECO:0007669"/>
    <property type="project" value="UniProtKB-KW"/>
</dbReference>
<dbReference type="GO" id="GO:0048364">
    <property type="term" value="P:root development"/>
    <property type="evidence" value="ECO:0000270"/>
    <property type="project" value="TAIR"/>
</dbReference>
<dbReference type="CDD" id="cd00018">
    <property type="entry name" value="AP2"/>
    <property type="match status" value="1"/>
</dbReference>
<dbReference type="FunFam" id="3.30.730.10:FF:000001">
    <property type="entry name" value="Ethylene-responsive transcription factor 2"/>
    <property type="match status" value="1"/>
</dbReference>
<dbReference type="Gene3D" id="3.30.730.10">
    <property type="entry name" value="AP2/ERF domain"/>
    <property type="match status" value="1"/>
</dbReference>
<dbReference type="InterPro" id="IPR001471">
    <property type="entry name" value="AP2/ERF_dom"/>
</dbReference>
<dbReference type="InterPro" id="IPR036955">
    <property type="entry name" value="AP2/ERF_dom_sf"/>
</dbReference>
<dbReference type="InterPro" id="IPR050913">
    <property type="entry name" value="AP2/ERF_ERF_subfamily"/>
</dbReference>
<dbReference type="InterPro" id="IPR016177">
    <property type="entry name" value="DNA-bd_dom_sf"/>
</dbReference>
<dbReference type="PANTHER" id="PTHR31194:SF140">
    <property type="entry name" value="ETHYLENE-RESPONSIVE TRANSCRIPTION FACTOR CRF2"/>
    <property type="match status" value="1"/>
</dbReference>
<dbReference type="PANTHER" id="PTHR31194">
    <property type="entry name" value="SHN SHINE , DNA BINDING / TRANSCRIPTION FACTOR"/>
    <property type="match status" value="1"/>
</dbReference>
<dbReference type="Pfam" id="PF00847">
    <property type="entry name" value="AP2"/>
    <property type="match status" value="1"/>
</dbReference>
<dbReference type="PRINTS" id="PR00367">
    <property type="entry name" value="ETHRSPELEMNT"/>
</dbReference>
<dbReference type="SMART" id="SM00380">
    <property type="entry name" value="AP2"/>
    <property type="match status" value="1"/>
</dbReference>
<dbReference type="SUPFAM" id="SSF54171">
    <property type="entry name" value="DNA-binding domain"/>
    <property type="match status" value="1"/>
</dbReference>
<dbReference type="PROSITE" id="PS51032">
    <property type="entry name" value="AP2_ERF"/>
    <property type="match status" value="1"/>
</dbReference>
<comment type="function">
    <text evidence="1 4">Component of the cytokinin signaling pathway involved in cotyledons, leaves, and embryos development. Probably acts as a transcriptional activator. Binds to the GCC-box pathogenesis-related promoter element. May be involved in the regulation of gene expression by stress factors and by components of stress signal transduction pathways (By similarity).</text>
</comment>
<comment type="interaction">
    <interactant intactId="EBI-5567273">
        <id>Q9SUQ2</id>
    </interactant>
    <interactant intactId="EBI-5567050">
        <id>O82503</id>
        <label>CRF1</label>
    </interactant>
    <organismsDiffer>false</organismsDiffer>
    <experiments>3</experiments>
</comment>
<comment type="interaction">
    <interactant intactId="EBI-5567273">
        <id>Q9SUQ2</id>
    </interactant>
    <interactant intactId="EBI-5567273">
        <id>Q9SUQ2</id>
        <label>CRF2</label>
    </interactant>
    <organismsDiffer>false</organismsDiffer>
    <experiments>3</experiments>
</comment>
<comment type="interaction">
    <interactant intactId="EBI-5567273">
        <id>Q9SUQ2</id>
    </interactant>
    <interactant intactId="EBI-5567993">
        <id>Q9FK12</id>
        <label>CRF3</label>
    </interactant>
    <organismsDiffer>false</organismsDiffer>
    <experiments>5</experiments>
</comment>
<comment type="interaction">
    <interactant intactId="EBI-5567273">
        <id>Q9SUQ2</id>
    </interactant>
    <interactant intactId="EBI-5567027">
        <id>Q9SUE3</id>
        <label>CRF4</label>
    </interactant>
    <organismsDiffer>false</organismsDiffer>
    <experiments>4</experiments>
</comment>
<comment type="interaction">
    <interactant intactId="EBI-5567273">
        <id>Q9SUQ2</id>
    </interactant>
    <interactant intactId="EBI-5567180">
        <id>O82339</id>
        <label>CRF5</label>
    </interactant>
    <organismsDiffer>false</organismsDiffer>
    <experiments>4</experiments>
</comment>
<comment type="interaction">
    <interactant intactId="EBI-5567273">
        <id>Q9SUQ2</id>
    </interactant>
    <interactant intactId="EBI-5568101">
        <id>Q9M374</id>
        <label>CRF6</label>
    </interactant>
    <organismsDiffer>false</organismsDiffer>
    <experiments>4</experiments>
</comment>
<comment type="interaction">
    <interactant intactId="EBI-5567273">
        <id>Q9SUQ2</id>
    </interactant>
    <interactant intactId="EBI-5568301">
        <id>Q8W4I5</id>
        <label>ERF069</label>
    </interactant>
    <organismsDiffer>false</organismsDiffer>
    <experiments>3</experiments>
</comment>
<comment type="interaction">
    <interactant intactId="EBI-5567273">
        <id>Q9SUQ2</id>
    </interactant>
    <interactant intactId="EBI-5568333">
        <id>Q9C995</id>
        <label>ERF070</label>
    </interactant>
    <organismsDiffer>false</organismsDiffer>
    <experiments>4</experiments>
</comment>
<comment type="subcellular location">
    <subcellularLocation>
        <location evidence="4">Cytoplasm</location>
    </subcellularLocation>
    <subcellularLocation>
        <location evidence="2 4">Nucleus</location>
    </subcellularLocation>
    <text>Relocalization from the cytoplasm into the nucleus is induced by cytokinins.</text>
</comment>
<comment type="induction">
    <text evidence="4">By cytokinins.</text>
</comment>
<comment type="similarity">
    <text evidence="5">Belongs to the AP2/ERF transcription factor family. ERF subfamily.</text>
</comment>
<keyword id="KW-0010">Activator</keyword>
<keyword id="KW-0932">Cytokinin signaling pathway</keyword>
<keyword id="KW-0963">Cytoplasm</keyword>
<keyword id="KW-0238">DNA-binding</keyword>
<keyword id="KW-0936">Ethylene signaling pathway</keyword>
<keyword id="KW-0539">Nucleus</keyword>
<keyword id="KW-1185">Reference proteome</keyword>
<keyword id="KW-0804">Transcription</keyword>
<keyword id="KW-0805">Transcription regulation</keyword>
<feature type="chain" id="PRO_0000290401" description="Ethylene-responsive transcription factor CRF2">
    <location>
        <begin position="1"/>
        <end position="343"/>
    </location>
</feature>
<feature type="DNA-binding region" description="AP2/ERF" evidence="2">
    <location>
        <begin position="121"/>
        <end position="178"/>
    </location>
</feature>
<feature type="region of interest" description="Disordered" evidence="3">
    <location>
        <begin position="40"/>
        <end position="60"/>
    </location>
</feature>
<feature type="region of interest" description="Disordered" evidence="3">
    <location>
        <begin position="180"/>
        <end position="223"/>
    </location>
</feature>
<feature type="compositionally biased region" description="Basic residues" evidence="3">
    <location>
        <begin position="195"/>
        <end position="207"/>
    </location>
</feature>
<feature type="compositionally biased region" description="Low complexity" evidence="3">
    <location>
        <begin position="208"/>
        <end position="220"/>
    </location>
</feature>
<feature type="sequence conflict" description="In Ref. 3; AAM98190." evidence="5" ref="3">
    <original>R</original>
    <variation>K</variation>
    <location>
        <position position="95"/>
    </location>
</feature>
<sequence length="343" mass="37873">MEAEKKMVLPRIKFTEHKTNTTTIVSELTNTHQTRILRISVTDPDATDSSSDDEEEEHQRFVSKRRRVKKFVNEVYLDSGAVVTGSCGQMESKKRQKRAVKSESTVSPVVSATTTTTGEKKFRGVRQRPWGKWAAEIRDPLKRVRLWLGTYNTAEEAAMVYDNAAIQLRGPDALTNFSVTPTTATEKKAPPPSPVKKKKKKNNKSKKSVTASSSISRSSSNDCLCSPVSVLRSPFAVDEFSGISSSPVAAVVVKEEPSMTTVSETFSDFSAPLFSDDDVFDFRSSVVPDYLGGDLFGEDLFTADMCTDMNFGFDFGSGLSSWHMEDHFQDIGDLFGSDPLLAV</sequence>
<accession>Q9SUQ2</accession>
<accession>Q8L701</accession>
<gene>
    <name type="primary">CRF2</name>
    <name type="synonym">ERF064</name>
    <name type="ordered locus">At4g23750</name>
    <name type="ORF">F9D16.220</name>
</gene>
<reference key="1">
    <citation type="journal article" date="1999" name="Nature">
        <title>Sequence and analysis of chromosome 4 of the plant Arabidopsis thaliana.</title>
        <authorList>
            <person name="Mayer K.F.X."/>
            <person name="Schueller C."/>
            <person name="Wambutt R."/>
            <person name="Murphy G."/>
            <person name="Volckaert G."/>
            <person name="Pohl T."/>
            <person name="Duesterhoeft A."/>
            <person name="Stiekema W."/>
            <person name="Entian K.-D."/>
            <person name="Terryn N."/>
            <person name="Harris B."/>
            <person name="Ansorge W."/>
            <person name="Brandt P."/>
            <person name="Grivell L.A."/>
            <person name="Rieger M."/>
            <person name="Weichselgartner M."/>
            <person name="de Simone V."/>
            <person name="Obermaier B."/>
            <person name="Mache R."/>
            <person name="Mueller M."/>
            <person name="Kreis M."/>
            <person name="Delseny M."/>
            <person name="Puigdomenech P."/>
            <person name="Watson M."/>
            <person name="Schmidtheini T."/>
            <person name="Reichert B."/>
            <person name="Portetelle D."/>
            <person name="Perez-Alonso M."/>
            <person name="Boutry M."/>
            <person name="Bancroft I."/>
            <person name="Vos P."/>
            <person name="Hoheisel J."/>
            <person name="Zimmermann W."/>
            <person name="Wedler H."/>
            <person name="Ridley P."/>
            <person name="Langham S.-A."/>
            <person name="McCullagh B."/>
            <person name="Bilham L."/>
            <person name="Robben J."/>
            <person name="van der Schueren J."/>
            <person name="Grymonprez B."/>
            <person name="Chuang Y.-J."/>
            <person name="Vandenbussche F."/>
            <person name="Braeken M."/>
            <person name="Weltjens I."/>
            <person name="Voet M."/>
            <person name="Bastiaens I."/>
            <person name="Aert R."/>
            <person name="Defoor E."/>
            <person name="Weitzenegger T."/>
            <person name="Bothe G."/>
            <person name="Ramsperger U."/>
            <person name="Hilbert H."/>
            <person name="Braun M."/>
            <person name="Holzer E."/>
            <person name="Brandt A."/>
            <person name="Peters S."/>
            <person name="van Staveren M."/>
            <person name="Dirkse W."/>
            <person name="Mooijman P."/>
            <person name="Klein Lankhorst R."/>
            <person name="Rose M."/>
            <person name="Hauf J."/>
            <person name="Koetter P."/>
            <person name="Berneiser S."/>
            <person name="Hempel S."/>
            <person name="Feldpausch M."/>
            <person name="Lamberth S."/>
            <person name="Van den Daele H."/>
            <person name="De Keyser A."/>
            <person name="Buysshaert C."/>
            <person name="Gielen J."/>
            <person name="Villarroel R."/>
            <person name="De Clercq R."/>
            <person name="van Montagu M."/>
            <person name="Rogers J."/>
            <person name="Cronin A."/>
            <person name="Quail M.A."/>
            <person name="Bray-Allen S."/>
            <person name="Clark L."/>
            <person name="Doggett J."/>
            <person name="Hall S."/>
            <person name="Kay M."/>
            <person name="Lennard N."/>
            <person name="McLay K."/>
            <person name="Mayes R."/>
            <person name="Pettett A."/>
            <person name="Rajandream M.A."/>
            <person name="Lyne M."/>
            <person name="Benes V."/>
            <person name="Rechmann S."/>
            <person name="Borkova D."/>
            <person name="Bloecker H."/>
            <person name="Scharfe M."/>
            <person name="Grimm M."/>
            <person name="Loehnert T.-H."/>
            <person name="Dose S."/>
            <person name="de Haan M."/>
            <person name="Maarse A.C."/>
            <person name="Schaefer M."/>
            <person name="Mueller-Auer S."/>
            <person name="Gabel C."/>
            <person name="Fuchs M."/>
            <person name="Fartmann B."/>
            <person name="Granderath K."/>
            <person name="Dauner D."/>
            <person name="Herzl A."/>
            <person name="Neumann S."/>
            <person name="Argiriou A."/>
            <person name="Vitale D."/>
            <person name="Liguori R."/>
            <person name="Piravandi E."/>
            <person name="Massenet O."/>
            <person name="Quigley F."/>
            <person name="Clabauld G."/>
            <person name="Muendlein A."/>
            <person name="Felber R."/>
            <person name="Schnabl S."/>
            <person name="Hiller R."/>
            <person name="Schmidt W."/>
            <person name="Lecharny A."/>
            <person name="Aubourg S."/>
            <person name="Chefdor F."/>
            <person name="Cooke R."/>
            <person name="Berger C."/>
            <person name="Monfort A."/>
            <person name="Casacuberta E."/>
            <person name="Gibbons T."/>
            <person name="Weber N."/>
            <person name="Vandenbol M."/>
            <person name="Bargues M."/>
            <person name="Terol J."/>
            <person name="Torres A."/>
            <person name="Perez-Perez A."/>
            <person name="Purnelle B."/>
            <person name="Bent E."/>
            <person name="Johnson S."/>
            <person name="Tacon D."/>
            <person name="Jesse T."/>
            <person name="Heijnen L."/>
            <person name="Schwarz S."/>
            <person name="Scholler P."/>
            <person name="Heber S."/>
            <person name="Francs P."/>
            <person name="Bielke C."/>
            <person name="Frishman D."/>
            <person name="Haase D."/>
            <person name="Lemcke K."/>
            <person name="Mewes H.-W."/>
            <person name="Stocker S."/>
            <person name="Zaccaria P."/>
            <person name="Bevan M."/>
            <person name="Wilson R.K."/>
            <person name="de la Bastide M."/>
            <person name="Habermann K."/>
            <person name="Parnell L."/>
            <person name="Dedhia N."/>
            <person name="Gnoj L."/>
            <person name="Schutz K."/>
            <person name="Huang E."/>
            <person name="Spiegel L."/>
            <person name="Sekhon M."/>
            <person name="Murray J."/>
            <person name="Sheet P."/>
            <person name="Cordes M."/>
            <person name="Abu-Threideh J."/>
            <person name="Stoneking T."/>
            <person name="Kalicki J."/>
            <person name="Graves T."/>
            <person name="Harmon G."/>
            <person name="Edwards J."/>
            <person name="Latreille P."/>
            <person name="Courtney L."/>
            <person name="Cloud J."/>
            <person name="Abbott A."/>
            <person name="Scott K."/>
            <person name="Johnson D."/>
            <person name="Minx P."/>
            <person name="Bentley D."/>
            <person name="Fulton B."/>
            <person name="Miller N."/>
            <person name="Greco T."/>
            <person name="Kemp K."/>
            <person name="Kramer J."/>
            <person name="Fulton L."/>
            <person name="Mardis E."/>
            <person name="Dante M."/>
            <person name="Pepin K."/>
            <person name="Hillier L.W."/>
            <person name="Nelson J."/>
            <person name="Spieth J."/>
            <person name="Ryan E."/>
            <person name="Andrews S."/>
            <person name="Geisel C."/>
            <person name="Layman D."/>
            <person name="Du H."/>
            <person name="Ali J."/>
            <person name="Berghoff A."/>
            <person name="Jones K."/>
            <person name="Drone K."/>
            <person name="Cotton M."/>
            <person name="Joshu C."/>
            <person name="Antonoiu B."/>
            <person name="Zidanic M."/>
            <person name="Strong C."/>
            <person name="Sun H."/>
            <person name="Lamar B."/>
            <person name="Yordan C."/>
            <person name="Ma P."/>
            <person name="Zhong J."/>
            <person name="Preston R."/>
            <person name="Vil D."/>
            <person name="Shekher M."/>
            <person name="Matero A."/>
            <person name="Shah R."/>
            <person name="Swaby I.K."/>
            <person name="O'Shaughnessy A."/>
            <person name="Rodriguez M."/>
            <person name="Hoffman J."/>
            <person name="Till S."/>
            <person name="Granat S."/>
            <person name="Shohdy N."/>
            <person name="Hasegawa A."/>
            <person name="Hameed A."/>
            <person name="Lodhi M."/>
            <person name="Johnson A."/>
            <person name="Chen E."/>
            <person name="Marra M.A."/>
            <person name="Martienssen R."/>
            <person name="McCombie W.R."/>
        </authorList>
    </citation>
    <scope>NUCLEOTIDE SEQUENCE [LARGE SCALE GENOMIC DNA]</scope>
    <source>
        <strain>cv. Columbia</strain>
    </source>
</reference>
<reference key="2">
    <citation type="journal article" date="2017" name="Plant J.">
        <title>Araport11: a complete reannotation of the Arabidopsis thaliana reference genome.</title>
        <authorList>
            <person name="Cheng C.Y."/>
            <person name="Krishnakumar V."/>
            <person name="Chan A.P."/>
            <person name="Thibaud-Nissen F."/>
            <person name="Schobel S."/>
            <person name="Town C.D."/>
        </authorList>
    </citation>
    <scope>GENOME REANNOTATION</scope>
    <source>
        <strain>cv. Columbia</strain>
    </source>
</reference>
<reference key="3">
    <citation type="journal article" date="2003" name="Science">
        <title>Empirical analysis of transcriptional activity in the Arabidopsis genome.</title>
        <authorList>
            <person name="Yamada K."/>
            <person name="Lim J."/>
            <person name="Dale J.M."/>
            <person name="Chen H."/>
            <person name="Shinn P."/>
            <person name="Palm C.J."/>
            <person name="Southwick A.M."/>
            <person name="Wu H.C."/>
            <person name="Kim C.J."/>
            <person name="Nguyen M."/>
            <person name="Pham P.K."/>
            <person name="Cheuk R.F."/>
            <person name="Karlin-Newmann G."/>
            <person name="Liu S.X."/>
            <person name="Lam B."/>
            <person name="Sakano H."/>
            <person name="Wu T."/>
            <person name="Yu G."/>
            <person name="Miranda M."/>
            <person name="Quach H.L."/>
            <person name="Tripp M."/>
            <person name="Chang C.H."/>
            <person name="Lee J.M."/>
            <person name="Toriumi M.J."/>
            <person name="Chan M.M."/>
            <person name="Tang C.C."/>
            <person name="Onodera C.S."/>
            <person name="Deng J.M."/>
            <person name="Akiyama K."/>
            <person name="Ansari Y."/>
            <person name="Arakawa T."/>
            <person name="Banh J."/>
            <person name="Banno F."/>
            <person name="Bowser L."/>
            <person name="Brooks S.Y."/>
            <person name="Carninci P."/>
            <person name="Chao Q."/>
            <person name="Choy N."/>
            <person name="Enju A."/>
            <person name="Goldsmith A.D."/>
            <person name="Gurjal M."/>
            <person name="Hansen N.F."/>
            <person name="Hayashizaki Y."/>
            <person name="Johnson-Hopson C."/>
            <person name="Hsuan V.W."/>
            <person name="Iida K."/>
            <person name="Karnes M."/>
            <person name="Khan S."/>
            <person name="Koesema E."/>
            <person name="Ishida J."/>
            <person name="Jiang P.X."/>
            <person name="Jones T."/>
            <person name="Kawai J."/>
            <person name="Kamiya A."/>
            <person name="Meyers C."/>
            <person name="Nakajima M."/>
            <person name="Narusaka M."/>
            <person name="Seki M."/>
            <person name="Sakurai T."/>
            <person name="Satou M."/>
            <person name="Tamse R."/>
            <person name="Vaysberg M."/>
            <person name="Wallender E.K."/>
            <person name="Wong C."/>
            <person name="Yamamura Y."/>
            <person name="Yuan S."/>
            <person name="Shinozaki K."/>
            <person name="Davis R.W."/>
            <person name="Theologis A."/>
            <person name="Ecker J.R."/>
        </authorList>
    </citation>
    <scope>NUCLEOTIDE SEQUENCE [LARGE SCALE MRNA]</scope>
    <source>
        <strain>cv. Columbia</strain>
    </source>
</reference>
<reference key="4">
    <citation type="submission" date="2004-07" db="EMBL/GenBank/DDBJ databases">
        <title>Arabidopsis ORF clones.</title>
        <authorList>
            <person name="Kim C.J."/>
            <person name="Chen H."/>
            <person name="Cheuk R.F."/>
            <person name="Shinn P."/>
            <person name="Ecker J.R."/>
        </authorList>
    </citation>
    <scope>NUCLEOTIDE SEQUENCE [LARGE SCALE MRNA]</scope>
    <source>
        <strain>cv. Columbia</strain>
    </source>
</reference>
<reference key="5">
    <citation type="journal article" date="2006" name="Proc. Natl. Acad. Sci. U.S.A.">
        <title>A subset of Arabidopsis AP2 transcription factors mediates cytokinin responses in concert with a two-component pathway.</title>
        <authorList>
            <person name="Rashotte A.M."/>
            <person name="Mason M.G."/>
            <person name="Hutchison C.E."/>
            <person name="Ferreira F.J."/>
            <person name="Schaller G.E."/>
            <person name="Kieber J.J."/>
        </authorList>
    </citation>
    <scope>FUNCTION</scope>
    <scope>INDUCTION BY CYTOKININS</scope>
    <scope>SUBCELLULAR LOCATION</scope>
</reference>
<reference key="6">
    <citation type="journal article" date="2006" name="Plant Physiol.">
        <title>Genome-wide analysis of the ERF gene family in Arabidopsis and rice.</title>
        <authorList>
            <person name="Nakano T."/>
            <person name="Suzuki K."/>
            <person name="Fujimura T."/>
            <person name="Shinshi H."/>
        </authorList>
    </citation>
    <scope>GENE FAMILY</scope>
    <scope>NOMENCLATURE</scope>
</reference>
<protein>
    <recommendedName>
        <fullName>Ethylene-responsive transcription factor CRF2</fullName>
    </recommendedName>
    <alternativeName>
        <fullName>Protein CYTOKININ RESPONSE FACTOR 2</fullName>
    </alternativeName>
</protein>
<name>CRF2_ARATH</name>
<organism>
    <name type="scientific">Arabidopsis thaliana</name>
    <name type="common">Mouse-ear cress</name>
    <dbReference type="NCBI Taxonomy" id="3702"/>
    <lineage>
        <taxon>Eukaryota</taxon>
        <taxon>Viridiplantae</taxon>
        <taxon>Streptophyta</taxon>
        <taxon>Embryophyta</taxon>
        <taxon>Tracheophyta</taxon>
        <taxon>Spermatophyta</taxon>
        <taxon>Magnoliopsida</taxon>
        <taxon>eudicotyledons</taxon>
        <taxon>Gunneridae</taxon>
        <taxon>Pentapetalae</taxon>
        <taxon>rosids</taxon>
        <taxon>malvids</taxon>
        <taxon>Brassicales</taxon>
        <taxon>Brassicaceae</taxon>
        <taxon>Camelineae</taxon>
        <taxon>Arabidopsis</taxon>
    </lineage>
</organism>
<proteinExistence type="evidence at protein level"/>
<evidence type="ECO:0000250" key="1"/>
<evidence type="ECO:0000255" key="2">
    <source>
        <dbReference type="PROSITE-ProRule" id="PRU00366"/>
    </source>
</evidence>
<evidence type="ECO:0000256" key="3">
    <source>
        <dbReference type="SAM" id="MobiDB-lite"/>
    </source>
</evidence>
<evidence type="ECO:0000269" key="4">
    <source>
    </source>
</evidence>
<evidence type="ECO:0000305" key="5"/>